<dbReference type="EMBL" id="AC012679">
    <property type="protein sequence ID" value="AAG52065.1"/>
    <property type="molecule type" value="Genomic_DNA"/>
</dbReference>
<dbReference type="EMBL" id="CP002684">
    <property type="protein sequence ID" value="AEE35510.1"/>
    <property type="molecule type" value="Genomic_DNA"/>
</dbReference>
<dbReference type="EMBL" id="AY058126">
    <property type="protein sequence ID" value="AAL25542.1"/>
    <property type="status" value="ALT_INIT"/>
    <property type="molecule type" value="mRNA"/>
</dbReference>
<dbReference type="EMBL" id="BT023740">
    <property type="protein sequence ID" value="AAZ23932.1"/>
    <property type="molecule type" value="mRNA"/>
</dbReference>
<dbReference type="PIR" id="D96765">
    <property type="entry name" value="D96765"/>
</dbReference>
<dbReference type="RefSeq" id="NP_565074.2">
    <property type="nucleotide sequence ID" value="NM_106040.3"/>
</dbReference>
<dbReference type="FunCoup" id="Q9C9T2">
    <property type="interactions" value="56"/>
</dbReference>
<dbReference type="STRING" id="3702.Q9C9T2"/>
<dbReference type="PaxDb" id="3702-AT1G73805.1"/>
<dbReference type="ProteomicsDB" id="232839"/>
<dbReference type="EnsemblPlants" id="AT1G73805.1">
    <property type="protein sequence ID" value="AT1G73805.1"/>
    <property type="gene ID" value="AT1G73805"/>
</dbReference>
<dbReference type="GeneID" id="843716"/>
<dbReference type="Gramene" id="AT1G73805.1">
    <property type="protein sequence ID" value="AT1G73805.1"/>
    <property type="gene ID" value="AT1G73805"/>
</dbReference>
<dbReference type="KEGG" id="ath:AT1G73805"/>
<dbReference type="Araport" id="AT1G73805"/>
<dbReference type="TAIR" id="AT1G73805">
    <property type="gene designation" value="SARD1"/>
</dbReference>
<dbReference type="eggNOG" id="ENOG502QR87">
    <property type="taxonomic scope" value="Eukaryota"/>
</dbReference>
<dbReference type="HOGENOM" id="CLU_031504_5_0_1"/>
<dbReference type="InParanoid" id="Q9C9T2"/>
<dbReference type="OMA" id="DHQIVPV"/>
<dbReference type="PhylomeDB" id="Q9C9T2"/>
<dbReference type="PRO" id="PR:Q9C9T2"/>
<dbReference type="Proteomes" id="UP000006548">
    <property type="component" value="Chromosome 1"/>
</dbReference>
<dbReference type="ExpressionAtlas" id="Q9C9T2">
    <property type="expression patterns" value="baseline and differential"/>
</dbReference>
<dbReference type="GO" id="GO:0005634">
    <property type="term" value="C:nucleus"/>
    <property type="evidence" value="ECO:0000314"/>
    <property type="project" value="TAIR"/>
</dbReference>
<dbReference type="GO" id="GO:0003700">
    <property type="term" value="F:DNA-binding transcription factor activity"/>
    <property type="evidence" value="ECO:0000314"/>
    <property type="project" value="UniProtKB"/>
</dbReference>
<dbReference type="GO" id="GO:0043565">
    <property type="term" value="F:sequence-specific DNA binding"/>
    <property type="evidence" value="ECO:0000314"/>
    <property type="project" value="UniProtKB"/>
</dbReference>
<dbReference type="GO" id="GO:0071219">
    <property type="term" value="P:cellular response to molecule of bacterial origin"/>
    <property type="evidence" value="ECO:0000314"/>
    <property type="project" value="UniProtKB"/>
</dbReference>
<dbReference type="GO" id="GO:0042742">
    <property type="term" value="P:defense response to bacterium"/>
    <property type="evidence" value="ECO:0000315"/>
    <property type="project" value="UniProtKB"/>
</dbReference>
<dbReference type="GO" id="GO:0002229">
    <property type="term" value="P:defense response to oomycetes"/>
    <property type="evidence" value="ECO:0000315"/>
    <property type="project" value="UniProtKB"/>
</dbReference>
<dbReference type="GO" id="GO:0009626">
    <property type="term" value="P:plant-type hypersensitive response"/>
    <property type="evidence" value="ECO:0007669"/>
    <property type="project" value="UniProtKB-KW"/>
</dbReference>
<dbReference type="GO" id="GO:1900426">
    <property type="term" value="P:positive regulation of defense response to bacterium"/>
    <property type="evidence" value="ECO:0000315"/>
    <property type="project" value="UniProtKB"/>
</dbReference>
<dbReference type="GO" id="GO:0006355">
    <property type="term" value="P:regulation of DNA-templated transcription"/>
    <property type="evidence" value="ECO:0000314"/>
    <property type="project" value="UniProtKB"/>
</dbReference>
<dbReference type="GO" id="GO:0080142">
    <property type="term" value="P:regulation of salicylic acid biosynthetic process"/>
    <property type="evidence" value="ECO:0000315"/>
    <property type="project" value="UniProtKB"/>
</dbReference>
<dbReference type="GO" id="GO:0010112">
    <property type="term" value="P:regulation of systemic acquired resistance"/>
    <property type="evidence" value="ECO:0000316"/>
    <property type="project" value="TAIR"/>
</dbReference>
<dbReference type="GO" id="GO:0009617">
    <property type="term" value="P:response to bacterium"/>
    <property type="evidence" value="ECO:0000314"/>
    <property type="project" value="UniProtKB"/>
</dbReference>
<dbReference type="GO" id="GO:0010224">
    <property type="term" value="P:response to UV-B"/>
    <property type="evidence" value="ECO:0000314"/>
    <property type="project" value="UniProtKB"/>
</dbReference>
<dbReference type="InterPro" id="IPR046829">
    <property type="entry name" value="Calmod_bind_C"/>
</dbReference>
<dbReference type="InterPro" id="IPR046830">
    <property type="entry name" value="Calmod_bind_M"/>
</dbReference>
<dbReference type="InterPro" id="IPR046831">
    <property type="entry name" value="Calmodulin_bind_N"/>
</dbReference>
<dbReference type="InterPro" id="IPR012416">
    <property type="entry name" value="CBP60"/>
</dbReference>
<dbReference type="PANTHER" id="PTHR31713">
    <property type="entry name" value="OS02G0177800 PROTEIN"/>
    <property type="match status" value="1"/>
</dbReference>
<dbReference type="PANTHER" id="PTHR31713:SF42">
    <property type="entry name" value="PROTEIN SAR DEFICIENT 1"/>
    <property type="match status" value="1"/>
</dbReference>
<dbReference type="Pfam" id="PF20452">
    <property type="entry name" value="Calmod_bind_C"/>
    <property type="match status" value="1"/>
</dbReference>
<dbReference type="Pfam" id="PF20451">
    <property type="entry name" value="Calmod_bind_M"/>
    <property type="match status" value="1"/>
</dbReference>
<dbReference type="Pfam" id="PF07887">
    <property type="entry name" value="Calmodulin_bind"/>
    <property type="match status" value="1"/>
</dbReference>
<comment type="function">
    <text evidence="1 2 3">Transcription activator that binds DNA in a sequence-specific manner, 5'-GAAATTTTGG-3', to promote the expression of target genes (PubMed:20921422, PubMed:21615571, PubMed:23153277). Recruited to the promoter of ICS1 and other defense-related genes (e.g. PR1 and SID2) in response to both biotic (e.g. Pseudomonas syringae pv. maculicola ES4326) and abiotic stresses (e.g. UV-B), thus triggering slow defense responses by stimulating salicylic acid (SA) biosynthesis. Required for basal and systemic acquired resistance to P.syringae pv. maculicola and Hyaloperonospora arabidopsidis (PubMed:20921422, PubMed:21615571).</text>
</comment>
<comment type="subunit">
    <text evidence="4">(Microbial infection) Interacts with V.dahliae SCP41.</text>
</comment>
<comment type="subcellular location">
    <subcellularLocation>
        <location evidence="1">Nucleus</location>
    </subcellularLocation>
</comment>
<comment type="induction">
    <text evidence="1 2 3">Induced slowly by Pseudomonas syringae p.v. maculicola ES4326 and by microbe-associated molecular patterns (MAMPs) such as flg22 in both local and systemic leaves.</text>
</comment>
<comment type="disruption phenotype">
    <text evidence="1 2">Compromised basal resistance and systemic acquired resistance (SAR) induced by Pseudomonas syringae p.v. maculicola ES4326 toward Hyaloperonospora arabidopsidis Noco2. Plants lacking both SARD1 and CBP60G fail to accumulate salicylic acid (SA) and to express PR1 and SID2 upon both biotic and abiotic stresses.</text>
</comment>
<comment type="similarity">
    <text evidence="7">Belongs to the plant ACBP60 protein family.</text>
</comment>
<comment type="sequence caution" evidence="6">
    <conflict type="erroneous initiation">
        <sequence resource="EMBL-CDS" id="AAL25542"/>
    </conflict>
    <text>Truncated N-terminus.</text>
</comment>
<protein>
    <recommendedName>
        <fullName evidence="5">Protein SAR DEFICIENT 1</fullName>
    </recommendedName>
</protein>
<organism evidence="10">
    <name type="scientific">Arabidopsis thaliana</name>
    <name type="common">Mouse-ear cress</name>
    <dbReference type="NCBI Taxonomy" id="3702"/>
    <lineage>
        <taxon>Eukaryota</taxon>
        <taxon>Viridiplantae</taxon>
        <taxon>Streptophyta</taxon>
        <taxon>Embryophyta</taxon>
        <taxon>Tracheophyta</taxon>
        <taxon>Spermatophyta</taxon>
        <taxon>Magnoliopsida</taxon>
        <taxon>eudicotyledons</taxon>
        <taxon>Gunneridae</taxon>
        <taxon>Pentapetalae</taxon>
        <taxon>rosids</taxon>
        <taxon>malvids</taxon>
        <taxon>Brassicales</taxon>
        <taxon>Brassicaceae</taxon>
        <taxon>Camelineae</taxon>
        <taxon>Arabidopsis</taxon>
    </lineage>
</organism>
<proteinExistence type="evidence at protein level"/>
<gene>
    <name evidence="5" type="primary">SARD1</name>
    <name evidence="8" type="ordered locus">At1g73805</name>
    <name evidence="9" type="ORF">F25P22.22</name>
</gene>
<evidence type="ECO:0000269" key="1">
    <source>
    </source>
</evidence>
<evidence type="ECO:0000269" key="2">
    <source>
    </source>
</evidence>
<evidence type="ECO:0000269" key="3">
    <source>
    </source>
</evidence>
<evidence type="ECO:0000269" key="4">
    <source>
    </source>
</evidence>
<evidence type="ECO:0000303" key="5">
    <source>
    </source>
</evidence>
<evidence type="ECO:0000305" key="6"/>
<evidence type="ECO:0000305" key="7">
    <source>
    </source>
</evidence>
<evidence type="ECO:0000312" key="8">
    <source>
        <dbReference type="Araport" id="AT1G73805"/>
    </source>
</evidence>
<evidence type="ECO:0000312" key="9">
    <source>
        <dbReference type="EMBL" id="AAG52065.1"/>
    </source>
</evidence>
<evidence type="ECO:0000312" key="10">
    <source>
        <dbReference type="Proteomes" id="UP000006548"/>
    </source>
</evidence>
<keyword id="KW-0010">Activator</keyword>
<keyword id="KW-0238">DNA-binding</keyword>
<keyword id="KW-0381">Hypersensitive response</keyword>
<keyword id="KW-0539">Nucleus</keyword>
<keyword id="KW-0611">Plant defense</keyword>
<keyword id="KW-1185">Reference proteome</keyword>
<keyword id="KW-0804">Transcription</keyword>
<keyword id="KW-0805">Transcription regulation</keyword>
<reference key="1">
    <citation type="journal article" date="2000" name="Nature">
        <title>Sequence and analysis of chromosome 1 of the plant Arabidopsis thaliana.</title>
        <authorList>
            <person name="Theologis A."/>
            <person name="Ecker J.R."/>
            <person name="Palm C.J."/>
            <person name="Federspiel N.A."/>
            <person name="Kaul S."/>
            <person name="White O."/>
            <person name="Alonso J."/>
            <person name="Altafi H."/>
            <person name="Araujo R."/>
            <person name="Bowman C.L."/>
            <person name="Brooks S.Y."/>
            <person name="Buehler E."/>
            <person name="Chan A."/>
            <person name="Chao Q."/>
            <person name="Chen H."/>
            <person name="Cheuk R.F."/>
            <person name="Chin C.W."/>
            <person name="Chung M.K."/>
            <person name="Conn L."/>
            <person name="Conway A.B."/>
            <person name="Conway A.R."/>
            <person name="Creasy T.H."/>
            <person name="Dewar K."/>
            <person name="Dunn P."/>
            <person name="Etgu P."/>
            <person name="Feldblyum T.V."/>
            <person name="Feng J.-D."/>
            <person name="Fong B."/>
            <person name="Fujii C.Y."/>
            <person name="Gill J.E."/>
            <person name="Goldsmith A.D."/>
            <person name="Haas B."/>
            <person name="Hansen N.F."/>
            <person name="Hughes B."/>
            <person name="Huizar L."/>
            <person name="Hunter J.L."/>
            <person name="Jenkins J."/>
            <person name="Johnson-Hopson C."/>
            <person name="Khan S."/>
            <person name="Khaykin E."/>
            <person name="Kim C.J."/>
            <person name="Koo H.L."/>
            <person name="Kremenetskaia I."/>
            <person name="Kurtz D.B."/>
            <person name="Kwan A."/>
            <person name="Lam B."/>
            <person name="Langin-Hooper S."/>
            <person name="Lee A."/>
            <person name="Lee J.M."/>
            <person name="Lenz C.A."/>
            <person name="Li J.H."/>
            <person name="Li Y.-P."/>
            <person name="Lin X."/>
            <person name="Liu S.X."/>
            <person name="Liu Z.A."/>
            <person name="Luros J.S."/>
            <person name="Maiti R."/>
            <person name="Marziali A."/>
            <person name="Militscher J."/>
            <person name="Miranda M."/>
            <person name="Nguyen M."/>
            <person name="Nierman W.C."/>
            <person name="Osborne B.I."/>
            <person name="Pai G."/>
            <person name="Peterson J."/>
            <person name="Pham P.K."/>
            <person name="Rizzo M."/>
            <person name="Rooney T."/>
            <person name="Rowley D."/>
            <person name="Sakano H."/>
            <person name="Salzberg S.L."/>
            <person name="Schwartz J.R."/>
            <person name="Shinn P."/>
            <person name="Southwick A.M."/>
            <person name="Sun H."/>
            <person name="Tallon L.J."/>
            <person name="Tambunga G."/>
            <person name="Toriumi M.J."/>
            <person name="Town C.D."/>
            <person name="Utterback T."/>
            <person name="Van Aken S."/>
            <person name="Vaysberg M."/>
            <person name="Vysotskaia V.S."/>
            <person name="Walker M."/>
            <person name="Wu D."/>
            <person name="Yu G."/>
            <person name="Fraser C.M."/>
            <person name="Venter J.C."/>
            <person name="Davis R.W."/>
        </authorList>
    </citation>
    <scope>NUCLEOTIDE SEQUENCE [LARGE SCALE GENOMIC DNA]</scope>
    <source>
        <strain>cv. Columbia</strain>
    </source>
</reference>
<reference key="2">
    <citation type="journal article" date="2017" name="Plant J.">
        <title>Araport11: a complete reannotation of the Arabidopsis thaliana reference genome.</title>
        <authorList>
            <person name="Cheng C.Y."/>
            <person name="Krishnakumar V."/>
            <person name="Chan A.P."/>
            <person name="Thibaud-Nissen F."/>
            <person name="Schobel S."/>
            <person name="Town C.D."/>
        </authorList>
    </citation>
    <scope>GENOME REANNOTATION</scope>
    <source>
        <strain>cv. Columbia</strain>
    </source>
</reference>
<reference key="3">
    <citation type="journal article" date="2003" name="Science">
        <title>Empirical analysis of transcriptional activity in the Arabidopsis genome.</title>
        <authorList>
            <person name="Yamada K."/>
            <person name="Lim J."/>
            <person name="Dale J.M."/>
            <person name="Chen H."/>
            <person name="Shinn P."/>
            <person name="Palm C.J."/>
            <person name="Southwick A.M."/>
            <person name="Wu H.C."/>
            <person name="Kim C.J."/>
            <person name="Nguyen M."/>
            <person name="Pham P.K."/>
            <person name="Cheuk R.F."/>
            <person name="Karlin-Newmann G."/>
            <person name="Liu S.X."/>
            <person name="Lam B."/>
            <person name="Sakano H."/>
            <person name="Wu T."/>
            <person name="Yu G."/>
            <person name="Miranda M."/>
            <person name="Quach H.L."/>
            <person name="Tripp M."/>
            <person name="Chang C.H."/>
            <person name="Lee J.M."/>
            <person name="Toriumi M.J."/>
            <person name="Chan M.M."/>
            <person name="Tang C.C."/>
            <person name="Onodera C.S."/>
            <person name="Deng J.M."/>
            <person name="Akiyama K."/>
            <person name="Ansari Y."/>
            <person name="Arakawa T."/>
            <person name="Banh J."/>
            <person name="Banno F."/>
            <person name="Bowser L."/>
            <person name="Brooks S.Y."/>
            <person name="Carninci P."/>
            <person name="Chao Q."/>
            <person name="Choy N."/>
            <person name="Enju A."/>
            <person name="Goldsmith A.D."/>
            <person name="Gurjal M."/>
            <person name="Hansen N.F."/>
            <person name="Hayashizaki Y."/>
            <person name="Johnson-Hopson C."/>
            <person name="Hsuan V.W."/>
            <person name="Iida K."/>
            <person name="Karnes M."/>
            <person name="Khan S."/>
            <person name="Koesema E."/>
            <person name="Ishida J."/>
            <person name="Jiang P.X."/>
            <person name="Jones T."/>
            <person name="Kawai J."/>
            <person name="Kamiya A."/>
            <person name="Meyers C."/>
            <person name="Nakajima M."/>
            <person name="Narusaka M."/>
            <person name="Seki M."/>
            <person name="Sakurai T."/>
            <person name="Satou M."/>
            <person name="Tamse R."/>
            <person name="Vaysberg M."/>
            <person name="Wallender E.K."/>
            <person name="Wong C."/>
            <person name="Yamamura Y."/>
            <person name="Yuan S."/>
            <person name="Shinozaki K."/>
            <person name="Davis R.W."/>
            <person name="Theologis A."/>
            <person name="Ecker J.R."/>
        </authorList>
    </citation>
    <scope>NUCLEOTIDE SEQUENCE [LARGE SCALE MRNA] OF 242-451</scope>
    <source>
        <strain>cv. Columbia</strain>
    </source>
</reference>
<reference key="4">
    <citation type="journal article" date="2010" name="Proc. Natl. Acad. Sci. U.S.A.">
        <title>Control of salicylic acid synthesis and systemic acquired resistance by two members of a plant-specific family of transcription factors.</title>
        <authorList>
            <person name="Zhang Y."/>
            <person name="Xu S."/>
            <person name="Ding P."/>
            <person name="Wang D."/>
            <person name="Cheng Y.T."/>
            <person name="He J."/>
            <person name="Gao M."/>
            <person name="Xu F."/>
            <person name="Li Y."/>
            <person name="Zhu Z."/>
            <person name="Li X."/>
            <person name="Zhang Y."/>
        </authorList>
    </citation>
    <scope>FUNCTION</scope>
    <scope>DISRUPTION PHENOTYPE</scope>
    <scope>INDUCTION BY PSEUDOMONAS SYRINGAE</scope>
    <scope>SUBCELLULAR LOCATION</scope>
    <scope>DNA-BINDING</scope>
    <source>
        <strain>cv. Columbia</strain>
    </source>
</reference>
<reference key="5">
    <citation type="journal article" date="2011" name="Plant J.">
        <title>CBP60g and SARD1 play partially redundant critical roles in salicylic acid signaling.</title>
        <authorList>
            <person name="Wang L."/>
            <person name="Tsuda K."/>
            <person name="Truman W."/>
            <person name="Sato M."/>
            <person name="Nguyen L.V."/>
            <person name="Katagiri F."/>
            <person name="Glazebrook J."/>
        </authorList>
    </citation>
    <scope>FUNCTION</scope>
    <scope>DISRUPTION PHENOTYPE</scope>
    <scope>INDUCTION BY PSEUDOMONAS SYRINGAE AND FLG22</scope>
    <source>
        <strain>cv. Columbia</strain>
    </source>
</reference>
<reference key="6">
    <citation type="journal article" date="2012" name="BMC Plant Biol.">
        <title>Co-expression analysis identifies putative targets for CBP60g and SARD1 regulation.</title>
        <authorList>
            <person name="Truman W."/>
            <person name="Glazebrook J."/>
        </authorList>
    </citation>
    <scope>FUNCTION IN TRANSCRIPTION REGULATION</scope>
    <scope>INDUCTION BY FLG22</scope>
</reference>
<reference key="7">
    <citation type="journal article" date="2018" name="Elife">
        <title>The plant-specific transcription factors CBP60g and SARD1 are targeted by a Verticillium secretory protein VdSCP41 to modulate immunity.</title>
        <authorList>
            <person name="Qin J."/>
            <person name="Wang K."/>
            <person name="Sun L."/>
            <person name="Xing H."/>
            <person name="Wang S."/>
            <person name="Li L."/>
            <person name="Chen S."/>
            <person name="Guo H.S."/>
            <person name="Zhang J."/>
        </authorList>
    </citation>
    <scope>INTERACTION WITH V.DAHLIAE SCP41</scope>
</reference>
<sequence length="451" mass="50705">MAGKRLFQDLDSDQENKSEKRIKSVLPSLASPISSVFGALISENTLRSVLEPVIRKVVRQEVEYGISKRFRLSRSSSFRIEAPEATTPTLKLIFRKNLMTPIFTGSKISDVDNNPLEIILVDDSNKPVNLNRPIKLDIVALHGDFPSGDKWTSDEFESNIIKERDGKRPLLAGEVSVTVRNGVATIGEIVFTDNSSWIRSRKFRIGAKVAKGSSGQGVVVCEAMTEAIVVRDHRGELYKKHHPPMLEDEVWRLEKIGKDGAFHKKLSSRHINTVQDFLKLSVVDVDELRQILGPGMSDRKWEVTLKHARECILGNKLYISRGPNFFMILNPICEVMKALIDGHVLSSQESLNQPYVKNLVRDAYSKGNFLEVGERTANEAALLTQGDDLDQQYAASHYQNIEIDKSYQQNGYVQERSTNNLEIVNEGYITTPAEFNICFTGSSSQNHINPF</sequence>
<name>SARD1_ARATH</name>
<feature type="chain" id="PRO_0000433044" description="Protein SAR DEFICIENT 1">
    <location>
        <begin position="1"/>
        <end position="451"/>
    </location>
</feature>
<feature type="region of interest" description="DNA-binding" evidence="5">
    <location>
        <begin position="149"/>
        <end position="270"/>
    </location>
</feature>
<accession>Q9C9T2</accession>
<accession>Q93Z50</accession>